<proteinExistence type="evidence at protein level"/>
<reference key="1">
    <citation type="journal article" date="1997" name="Gene">
        <title>Identification of N-WASP homologs in human and rat brain.</title>
        <authorList>
            <person name="Fukuoka M."/>
            <person name="Miki H."/>
            <person name="Takenawa T."/>
        </authorList>
    </citation>
    <scope>NUCLEOTIDE SEQUENCE [MRNA]</scope>
    <source>
        <tissue>Brain</tissue>
    </source>
</reference>
<reference key="2">
    <citation type="submission" date="2006-07" db="EMBL/GenBank/DDBJ databases">
        <title>Analysis of the anti-tumor T cell repertoire of melanoma patients vaccinated with a mixed tumor cell/DC vaccine.</title>
        <authorList>
            <person name="Lennerz V."/>
            <person name="Fatho M."/>
            <person name="Eberts D."/>
            <person name="Woelfel C."/>
            <person name="Schreiber S."/>
            <person name="Huber C."/>
            <person name="van der Bruggen P."/>
            <person name="Schmidt C.W."/>
            <person name="Woelfel T."/>
        </authorList>
    </citation>
    <scope>NUCLEOTIDE SEQUENCE [MRNA]</scope>
    <source>
        <tissue>Melanoma</tissue>
    </source>
</reference>
<reference key="3">
    <citation type="journal article" date="2003" name="Nature">
        <title>The DNA sequence of human chromosome 7.</title>
        <authorList>
            <person name="Hillier L.W."/>
            <person name="Fulton R.S."/>
            <person name="Fulton L.A."/>
            <person name="Graves T.A."/>
            <person name="Pepin K.H."/>
            <person name="Wagner-McPherson C."/>
            <person name="Layman D."/>
            <person name="Maas J."/>
            <person name="Jaeger S."/>
            <person name="Walker R."/>
            <person name="Wylie K."/>
            <person name="Sekhon M."/>
            <person name="Becker M.C."/>
            <person name="O'Laughlin M.D."/>
            <person name="Schaller M.E."/>
            <person name="Fewell G.A."/>
            <person name="Delehaunty K.D."/>
            <person name="Miner T.L."/>
            <person name="Nash W.E."/>
            <person name="Cordes M."/>
            <person name="Du H."/>
            <person name="Sun H."/>
            <person name="Edwards J."/>
            <person name="Bradshaw-Cordum H."/>
            <person name="Ali J."/>
            <person name="Andrews S."/>
            <person name="Isak A."/>
            <person name="Vanbrunt A."/>
            <person name="Nguyen C."/>
            <person name="Du F."/>
            <person name="Lamar B."/>
            <person name="Courtney L."/>
            <person name="Kalicki J."/>
            <person name="Ozersky P."/>
            <person name="Bielicki L."/>
            <person name="Scott K."/>
            <person name="Holmes A."/>
            <person name="Harkins R."/>
            <person name="Harris A."/>
            <person name="Strong C.M."/>
            <person name="Hou S."/>
            <person name="Tomlinson C."/>
            <person name="Dauphin-Kohlberg S."/>
            <person name="Kozlowicz-Reilly A."/>
            <person name="Leonard S."/>
            <person name="Rohlfing T."/>
            <person name="Rock S.M."/>
            <person name="Tin-Wollam A.-M."/>
            <person name="Abbott A."/>
            <person name="Minx P."/>
            <person name="Maupin R."/>
            <person name="Strowmatt C."/>
            <person name="Latreille P."/>
            <person name="Miller N."/>
            <person name="Johnson D."/>
            <person name="Murray J."/>
            <person name="Woessner J.P."/>
            <person name="Wendl M.C."/>
            <person name="Yang S.-P."/>
            <person name="Schultz B.R."/>
            <person name="Wallis J.W."/>
            <person name="Spieth J."/>
            <person name="Bieri T.A."/>
            <person name="Nelson J.O."/>
            <person name="Berkowicz N."/>
            <person name="Wohldmann P.E."/>
            <person name="Cook L.L."/>
            <person name="Hickenbotham M.T."/>
            <person name="Eldred J."/>
            <person name="Williams D."/>
            <person name="Bedell J.A."/>
            <person name="Mardis E.R."/>
            <person name="Clifton S.W."/>
            <person name="Chissoe S.L."/>
            <person name="Marra M.A."/>
            <person name="Raymond C."/>
            <person name="Haugen E."/>
            <person name="Gillett W."/>
            <person name="Zhou Y."/>
            <person name="James R."/>
            <person name="Phelps K."/>
            <person name="Iadanoto S."/>
            <person name="Bubb K."/>
            <person name="Simms E."/>
            <person name="Levy R."/>
            <person name="Clendenning J."/>
            <person name="Kaul R."/>
            <person name="Kent W.J."/>
            <person name="Furey T.S."/>
            <person name="Baertsch R.A."/>
            <person name="Brent M.R."/>
            <person name="Keibler E."/>
            <person name="Flicek P."/>
            <person name="Bork P."/>
            <person name="Suyama M."/>
            <person name="Bailey J.A."/>
            <person name="Portnoy M.E."/>
            <person name="Torrents D."/>
            <person name="Chinwalla A.T."/>
            <person name="Gish W.R."/>
            <person name="Eddy S.R."/>
            <person name="McPherson J.D."/>
            <person name="Olson M.V."/>
            <person name="Eichler E.E."/>
            <person name="Green E.D."/>
            <person name="Waterston R.H."/>
            <person name="Wilson R.K."/>
        </authorList>
    </citation>
    <scope>NUCLEOTIDE SEQUENCE [LARGE SCALE GENOMIC DNA]</scope>
</reference>
<reference key="4">
    <citation type="journal article" date="2004" name="Genome Res.">
        <title>The status, quality, and expansion of the NIH full-length cDNA project: the Mammalian Gene Collection (MGC).</title>
        <authorList>
            <consortium name="The MGC Project Team"/>
        </authorList>
    </citation>
    <scope>NUCLEOTIDE SEQUENCE [LARGE SCALE MRNA]</scope>
    <source>
        <tissue>Brain</tissue>
    </source>
</reference>
<reference key="5">
    <citation type="journal article" date="1998" name="Nature">
        <title>Induction of filopodium formation by a WASP-related actin-depolymerizing protein N-WASP.</title>
        <authorList>
            <person name="Miki H."/>
            <person name="Sasaki T."/>
            <person name="Takai Y."/>
            <person name="Takenawa T."/>
        </authorList>
    </citation>
    <scope>FUNCTION</scope>
    <scope>SUBCELLULAR LOCATION</scope>
    <scope>INTERACTION WITH CDC42</scope>
</reference>
<reference key="6">
    <citation type="journal article" date="1998" name="EMBO J.">
        <title>Neural Wiskott-Aldrich syndrome protein is implicated in the actin-based motility of Shigella flexneri.</title>
        <authorList>
            <person name="Suzuki T."/>
            <person name="Miki H."/>
            <person name="Takenawa T."/>
            <person name="Sasakawa C."/>
        </authorList>
    </citation>
    <scope>INTERACTION WITH SHIGELLA FLEXNERI ICSA (MICROBIAL INFECTION)</scope>
</reference>
<reference key="7">
    <citation type="journal article" date="1999" name="J. Cell Biol.">
        <title>Activation of the CDC42 effector N-WASP by the Shigella flexneri IcsA protein promotes actin nucleation by Arp2/3 complex and bacterial actin-based motility.</title>
        <authorList>
            <person name="Egile C."/>
            <person name="Loisel T.P."/>
            <person name="Laurent V."/>
            <person name="Li R."/>
            <person name="Pantaloni D."/>
            <person name="Sansonetti P.J."/>
            <person name="Carlier M.-F."/>
        </authorList>
    </citation>
    <scope>INTERACTION WITH SHIGELLA FLEXNERI ICSA (MICROBIAL INFECTION)</scope>
</reference>
<reference key="8">
    <citation type="journal article" date="2005" name="J. Biol. Chem.">
        <title>Phosphorylation of WASP by the Cdc42-associated kinase ACK1: dual hydroxyamino acid specificity in a tyrosine kinase.</title>
        <authorList>
            <person name="Yokoyama N."/>
            <person name="Lougheed J."/>
            <person name="Miller W.T."/>
        </authorList>
    </citation>
    <scope>PHOSPHORYLATION AT SER-242 AND TYR-256 BY TNK2</scope>
    <scope>INTERACTION WITH TNK2</scope>
</reference>
<reference key="9">
    <citation type="journal article" date="2005" name="J. Cell Sci.">
        <title>NOSTRIN functions as a homotrimeric adaptor protein facilitating internalization of eNOS.</title>
        <authorList>
            <person name="Icking A."/>
            <person name="Matt S."/>
            <person name="Opitz N."/>
            <person name="Wiesenthal A."/>
            <person name="Mueller-Esterl W."/>
            <person name="Schilling K."/>
        </authorList>
    </citation>
    <scope>INTERACTION WITH NOSTRIN</scope>
</reference>
<reference key="10">
    <citation type="journal article" date="2006" name="Nat. Cell Biol.">
        <title>Regulation of RNA-polymerase-II-dependent transcription by N-WASP and its nuclear-binding partners.</title>
        <authorList>
            <person name="Wu X."/>
            <person name="Yoo Y."/>
            <person name="Okuhama N.N."/>
            <person name="Tucker P.W."/>
            <person name="Liu G."/>
            <person name="Guan J.L."/>
        </authorList>
    </citation>
    <scope>FUNCTION</scope>
    <scope>SUBCELLULAR LOCATION</scope>
    <scope>IDENTIFICATION IN A COMPLEX WITH NONO AND SFPQ</scope>
    <scope>INTERACTION WITH NONO</scope>
</reference>
<reference key="11">
    <citation type="journal article" date="2006" name="J. Cell Biol.">
        <title>Cdc42 GEF Tuba regulates the junctional configuration of simple epithelial cells.</title>
        <authorList>
            <person name="Otani T."/>
            <person name="Ichii T."/>
            <person name="Aono S."/>
            <person name="Takeichi M."/>
        </authorList>
    </citation>
    <scope>INTERACTION WITH DNMBP</scope>
</reference>
<reference key="12">
    <citation type="journal article" date="2008" name="Proc. Natl. Acad. Sci. U.S.A.">
        <title>A quantitative atlas of mitotic phosphorylation.</title>
        <authorList>
            <person name="Dephoure N."/>
            <person name="Zhou C."/>
            <person name="Villen J."/>
            <person name="Beausoleil S.A."/>
            <person name="Bakalarski C.E."/>
            <person name="Elledge S.J."/>
            <person name="Gygi S.P."/>
        </authorList>
    </citation>
    <scope>IDENTIFICATION BY MASS SPECTROMETRY [LARGE SCALE ANALYSIS]</scope>
    <source>
        <tissue>Cervix carcinoma</tissue>
    </source>
</reference>
<reference key="13">
    <citation type="journal article" date="2009" name="Anal. Chem.">
        <title>Lys-N and trypsin cover complementary parts of the phosphoproteome in a refined SCX-based approach.</title>
        <authorList>
            <person name="Gauci S."/>
            <person name="Helbig A.O."/>
            <person name="Slijper M."/>
            <person name="Krijgsveld J."/>
            <person name="Heck A.J."/>
            <person name="Mohammed S."/>
        </authorList>
    </citation>
    <scope>ACETYLATION [LARGE SCALE ANALYSIS] AT SER-2</scope>
    <scope>CLEAVAGE OF INITIATOR METHIONINE [LARGE SCALE ANALYSIS]</scope>
    <scope>IDENTIFICATION BY MASS SPECTROMETRY [LARGE SCALE ANALYSIS]</scope>
</reference>
<reference key="14">
    <citation type="journal article" date="2009" name="J. Biol. Chem.">
        <title>Sorting nexin 33 induces mammalian cell micronucleated phenotype and actin polymerization by interacting with Wiskott-Aldrich syndrome protein.</title>
        <authorList>
            <person name="Zhang J."/>
            <person name="Zhang X."/>
            <person name="Guo Y."/>
            <person name="Xu L."/>
            <person name="Pei D."/>
        </authorList>
    </citation>
    <scope>FUNCTION</scope>
    <scope>INTERACTION WITH SNX33</scope>
</reference>
<reference key="15">
    <citation type="journal article" date="2009" name="Nat. Cell Biol.">
        <title>The bacterial virulence factor InlC perturbs apical cell junctions and promotes cell-to-cell spread of Listeria.</title>
        <authorList>
            <person name="Rajabian T."/>
            <person name="Gavicherla B."/>
            <person name="Heisig M."/>
            <person name="Mueller-Altrock S."/>
            <person name="Goebel W."/>
            <person name="Gray-Owen S.D."/>
            <person name="Ireton K."/>
        </authorList>
    </citation>
    <scope>FUNCTION</scope>
    <scope>INTERACTION WITH DNMBP</scope>
</reference>
<reference key="16">
    <citation type="journal article" date="2009" name="Proc. Natl. Acad. Sci. U.S.A.">
        <title>Insulin receptor tyrosine kinase substrate links the E. coli O157:H7 actin assembly effectors Tir and EspF(U) during pedestal formation.</title>
        <authorList>
            <person name="Vingadassalom D."/>
            <person name="Kazlauskas A."/>
            <person name="Skehan B."/>
            <person name="Cheng H.C."/>
            <person name="Magoun L."/>
            <person name="Robbins D."/>
            <person name="Rosen M.K."/>
            <person name="Saksela K."/>
            <person name="Leong J.M."/>
        </authorList>
    </citation>
    <scope>FUNCTION</scope>
    <scope>INTERACTION WITH E.COLI EFFECTOR PROTEIN ESPF(U) (MICROBIAL INFECTION)</scope>
    <scope>IDENTIFICATION IN A COMPLEX WITH BAIAP2L1 AND E.COLI EFFECTOR PROTEIN ESPF(U)</scope>
</reference>
<reference key="17">
    <citation type="journal article" date="2010" name="Sci. Signal.">
        <title>Quantitative phosphoproteomics reveals widespread full phosphorylation site occupancy during mitosis.</title>
        <authorList>
            <person name="Olsen J.V."/>
            <person name="Vermeulen M."/>
            <person name="Santamaria A."/>
            <person name="Kumar C."/>
            <person name="Miller M.L."/>
            <person name="Jensen L.J."/>
            <person name="Gnad F."/>
            <person name="Cox J."/>
            <person name="Jensen T.S."/>
            <person name="Nigg E.A."/>
            <person name="Brunak S."/>
            <person name="Mann M."/>
        </authorList>
    </citation>
    <scope>PHOSPHORYLATION [LARGE SCALE ANALYSIS] AT TYR-256; SER-484 AND SER-485</scope>
    <scope>IDENTIFICATION BY MASS SPECTROMETRY [LARGE SCALE ANALYSIS]</scope>
    <source>
        <tissue>Cervix carcinoma</tissue>
    </source>
</reference>
<reference key="18">
    <citation type="journal article" date="2011" name="BMC Syst. Biol.">
        <title>Initial characterization of the human central proteome.</title>
        <authorList>
            <person name="Burkard T.R."/>
            <person name="Planyavsky M."/>
            <person name="Kaupe I."/>
            <person name="Breitwieser F.P."/>
            <person name="Buerckstuemmer T."/>
            <person name="Bennett K.L."/>
            <person name="Superti-Furga G."/>
            <person name="Colinge J."/>
        </authorList>
    </citation>
    <scope>IDENTIFICATION BY MASS SPECTROMETRY [LARGE SCALE ANALYSIS]</scope>
</reference>
<reference key="19">
    <citation type="journal article" date="2011" name="Sci. Signal.">
        <title>System-wide temporal characterization of the proteome and phosphoproteome of human embryonic stem cell differentiation.</title>
        <authorList>
            <person name="Rigbolt K.T."/>
            <person name="Prokhorova T.A."/>
            <person name="Akimov V."/>
            <person name="Henningsen J."/>
            <person name="Johansen P.T."/>
            <person name="Kratchmarova I."/>
            <person name="Kassem M."/>
            <person name="Mann M."/>
            <person name="Olsen J.V."/>
            <person name="Blagoev B."/>
        </authorList>
    </citation>
    <scope>PHOSPHORYLATION [LARGE SCALE ANALYSIS] AT SER-484 AND SER-485</scope>
    <scope>IDENTIFICATION BY MASS SPECTROMETRY [LARGE SCALE ANALYSIS]</scope>
</reference>
<reference key="20">
    <citation type="journal article" date="2012" name="Mol. Cell. Proteomics">
        <title>Comparative large-scale characterisation of plant vs. mammal proteins reveals similar and idiosyncratic N-alpha acetylation features.</title>
        <authorList>
            <person name="Bienvenut W.V."/>
            <person name="Sumpton D."/>
            <person name="Martinez A."/>
            <person name="Lilla S."/>
            <person name="Espagne C."/>
            <person name="Meinnel T."/>
            <person name="Giglione C."/>
        </authorList>
    </citation>
    <scope>ACETYLATION [LARGE SCALE ANALYSIS] AT SER-2</scope>
    <scope>CLEAVAGE OF INITIATOR METHIONINE [LARGE SCALE ANALYSIS]</scope>
    <scope>IDENTIFICATION BY MASS SPECTROMETRY [LARGE SCALE ANALYSIS]</scope>
</reference>
<reference key="21">
    <citation type="journal article" date="2012" name="Proc. Natl. Acad. Sci. U.S.A.">
        <title>N-terminal acetylome analyses and functional insights of the N-terminal acetyltransferase NatB.</title>
        <authorList>
            <person name="Van Damme P."/>
            <person name="Lasa M."/>
            <person name="Polevoda B."/>
            <person name="Gazquez C."/>
            <person name="Elosegui-Artola A."/>
            <person name="Kim D.S."/>
            <person name="De Juan-Pardo E."/>
            <person name="Demeyer K."/>
            <person name="Hole K."/>
            <person name="Larrea E."/>
            <person name="Timmerman E."/>
            <person name="Prieto J."/>
            <person name="Arnesen T."/>
            <person name="Sherman F."/>
            <person name="Gevaert K."/>
            <person name="Aldabe R."/>
        </authorList>
    </citation>
    <scope>ACETYLATION [LARGE SCALE ANALYSIS] AT SER-2</scope>
    <scope>CLEAVAGE OF INITIATOR METHIONINE [LARGE SCALE ANALYSIS]</scope>
    <scope>IDENTIFICATION BY MASS SPECTROMETRY [LARGE SCALE ANALYSIS]</scope>
</reference>
<reference key="22">
    <citation type="journal article" date="2014" name="Mol. Cell. Proteomics">
        <title>Immunoaffinity enrichment and mass spectrometry analysis of protein methylation.</title>
        <authorList>
            <person name="Guo A."/>
            <person name="Gu H."/>
            <person name="Zhou J."/>
            <person name="Mulhern D."/>
            <person name="Wang Y."/>
            <person name="Lee K.A."/>
            <person name="Yang V."/>
            <person name="Aguiar M."/>
            <person name="Kornhauser J."/>
            <person name="Jia X."/>
            <person name="Ren J."/>
            <person name="Beausoleil S.A."/>
            <person name="Silva J.C."/>
            <person name="Vemulapalli V."/>
            <person name="Bedford M.T."/>
            <person name="Comb M.J."/>
        </authorList>
    </citation>
    <scope>METHYLATION [LARGE SCALE ANALYSIS] AT ARG-307</scope>
    <scope>IDENTIFICATION BY MASS SPECTROMETRY [LARGE SCALE ANALYSIS]</scope>
    <source>
        <tissue>Colon carcinoma</tissue>
    </source>
</reference>
<reference key="23">
    <citation type="journal article" date="2018" name="Cell">
        <title>A Flat BAR Protein Promotes Actin Polymerization at the Base of Clathrin-Coated Pits.</title>
        <authorList>
            <person name="Almeida-Souza L."/>
            <person name="Frank R.A.W."/>
            <person name="Garcia-Nafria J."/>
            <person name="Colussi A."/>
            <person name="Gunawardana N."/>
            <person name="Johnson C.M."/>
            <person name="Yu M."/>
            <person name="Howard G."/>
            <person name="Andrews B."/>
            <person name="Vallis Y."/>
            <person name="McMahon H.T."/>
        </authorList>
    </citation>
    <scope>INTERACTION WITH FCHSD2</scope>
</reference>
<reference key="24">
    <citation type="journal article" date="2006" name="Structure">
        <title>The structural basis of actin interaction with multiple WH2/beta-thymosin motif-containing proteins.</title>
        <authorList>
            <person name="Aguda A.H."/>
            <person name="Xue B."/>
            <person name="Irobi E."/>
            <person name="Preat T."/>
            <person name="Robinson R.C."/>
        </authorList>
    </citation>
    <scope>X-RAY CRYSTALLOGRAPHY (2.0 ANGSTROMS) OF 451-465</scope>
</reference>
<reference key="25">
    <citation type="journal article" date="2012" name="J. Biol. Chem.">
        <title>Interactions of isolated C-terminal fragments of neural Wiskott-Aldrich syndrome protein (N-WASP) with actin and Arp2/3 complex.</title>
        <authorList>
            <person name="Gaucher J.F."/>
            <person name="Mauge C."/>
            <person name="Didry D."/>
            <person name="Guichard B."/>
            <person name="Renault L."/>
            <person name="Carlier M.F."/>
        </authorList>
    </citation>
    <scope>X-RAY CRYSTALLOGRAPHY (3.2 ANGSTROMS) OF 392-484 IN COMPLEX WITH ACTIN</scope>
    <scope>FUNCTION</scope>
    <scope>SUBUNIT</scope>
    <scope>INTERACTION WITH THE ARP2/3 COMPLEX</scope>
    <scope>ACTIN-BINDING</scope>
</reference>
<reference key="26">
    <citation type="journal article" date="2012" name="Structure">
        <title>Enterohaemorrhagic Escherichia coli exploits a tryptophan switch to hijack host f-actin assembly.</title>
        <authorList>
            <person name="Aitio O."/>
            <person name="Hellman M."/>
            <person name="Skehan B."/>
            <person name="Kesti T."/>
            <person name="Leong J.M."/>
            <person name="Saksela K."/>
            <person name="Permi P."/>
        </authorList>
    </citation>
    <scope>STRUCTURE BY NMR OF 207-270 IN COMPLEX WITH BAIAP2L1 AND THE E.COLI SECRETED EFFECTOR PROTEIN ESPF(U) (MICROBIAL INFECTION)</scope>
    <scope>IDENTIFICATION IN A COMPLEX WITH BAIAP2L1 AND E.COLI EFFECTOR PROTEIN ESPF(U)</scope>
    <scope>FUNCTION</scope>
</reference>
<reference evidence="23 24" key="27">
    <citation type="journal article" date="2014" name="Structure">
        <title>Structural details of human tuba recruitment by InlC of Listeria monocytogenes elucidate bacterial cell-cell spreading.</title>
        <authorList>
            <person name="Polle L."/>
            <person name="Rigano L.A."/>
            <person name="Julian R."/>
            <person name="Ireton K."/>
            <person name="Schubert W.D."/>
        </authorList>
    </citation>
    <scope>X-RAY CRYSTALLOGRAPHY (1.55 ANGSTROMS) OF 346-357 IN COMPLEX WITH DNMBP</scope>
    <scope>SUBUNIT</scope>
</reference>
<feature type="initiator methionine" description="Removed" evidence="25 28 29">
    <location>
        <position position="1"/>
    </location>
</feature>
<feature type="chain" id="PRO_0000189000" description="Actin nucleation-promoting factor WASL">
    <location>
        <begin position="2"/>
        <end position="505"/>
    </location>
</feature>
<feature type="domain" description="WH1" evidence="5">
    <location>
        <begin position="34"/>
        <end position="141"/>
    </location>
</feature>
<feature type="domain" description="CRIB" evidence="3">
    <location>
        <begin position="203"/>
        <end position="216"/>
    </location>
</feature>
<feature type="domain" description="WH2 1" evidence="4">
    <location>
        <begin position="405"/>
        <end position="422"/>
    </location>
</feature>
<feature type="domain" description="WH2 2" evidence="4">
    <location>
        <begin position="433"/>
        <end position="450"/>
    </location>
</feature>
<feature type="region of interest" description="Disordered" evidence="6">
    <location>
        <begin position="138"/>
        <end position="163"/>
    </location>
</feature>
<feature type="region of interest" description="Disordered" evidence="6">
    <location>
        <begin position="184"/>
        <end position="205"/>
    </location>
</feature>
<feature type="region of interest" description="Disordered" evidence="6">
    <location>
        <begin position="266"/>
        <end position="406"/>
    </location>
</feature>
<feature type="region of interest" description="Disordered" evidence="6">
    <location>
        <begin position="476"/>
        <end position="505"/>
    </location>
</feature>
<feature type="compositionally biased region" description="Basic residues" evidence="6">
    <location>
        <begin position="186"/>
        <end position="198"/>
    </location>
</feature>
<feature type="compositionally biased region" description="Pro residues" evidence="6">
    <location>
        <begin position="276"/>
        <end position="364"/>
    </location>
</feature>
<feature type="compositionally biased region" description="Pro residues" evidence="6">
    <location>
        <begin position="371"/>
        <end position="391"/>
    </location>
</feature>
<feature type="compositionally biased region" description="Acidic residues" evidence="6">
    <location>
        <begin position="486"/>
        <end position="505"/>
    </location>
</feature>
<feature type="modified residue" description="N-acetylserine" evidence="25 28 29">
    <location>
        <position position="2"/>
    </location>
</feature>
<feature type="modified residue" description="Phosphoserine; by TNK2" evidence="9">
    <location>
        <position position="242"/>
    </location>
</feature>
<feature type="modified residue" description="Phosphotyrosine; by FAK1 and TNK2" evidence="9 26">
    <location>
        <position position="256"/>
    </location>
</feature>
<feature type="modified residue" description="Omega-N-methylarginine" evidence="30">
    <location>
        <position position="307"/>
    </location>
</feature>
<feature type="modified residue" description="Phosphoserine" evidence="26 27">
    <location>
        <position position="484"/>
    </location>
</feature>
<feature type="modified residue" description="Phosphoserine" evidence="26 27">
    <location>
        <position position="485"/>
    </location>
</feature>
<feature type="sequence conflict" description="In Ref. 1; BAA20128." evidence="22" ref="1">
    <original>Y</original>
    <variation>H</variation>
    <location>
        <position position="76"/>
    </location>
</feature>
<feature type="sequence conflict" description="In Ref. 1; BAA20128." evidence="22" ref="1">
    <original>A</original>
    <variation>G</variation>
    <location>
        <position position="201"/>
    </location>
</feature>
<feature type="sequence conflict" description="In Ref. 1; BAA20128." evidence="22" ref="1">
    <original>F</original>
    <variation>S</variation>
    <location>
        <position position="223"/>
    </location>
</feature>
<feature type="sequence conflict" description="In Ref. 1; BAA20128." evidence="22" ref="1">
    <original>S</original>
    <variation>L</variation>
    <location>
        <position position="242"/>
    </location>
</feature>
<feature type="sequence conflict" description="In Ref. 1; BAA20128." evidence="22" ref="1">
    <original>D</original>
    <variation>E</variation>
    <location>
        <position position="248"/>
    </location>
</feature>
<feature type="sequence conflict" description="In Ref. 1; BAA20128." evidence="22" ref="1">
    <original>S</original>
    <variation>L</variation>
    <location>
        <position position="252"/>
    </location>
</feature>
<feature type="sequence conflict" description="In Ref. 1; BAA20128." evidence="22" ref="1">
    <original>N</original>
    <variation>S</variation>
    <location>
        <position position="296"/>
    </location>
</feature>
<feature type="sequence conflict" description="In Ref. 1; BAA20128." evidence="22" ref="1">
    <original>A</original>
    <variation>E</variation>
    <location>
        <position position="333"/>
    </location>
</feature>
<feature type="sequence conflict" description="In Ref. 2; CAL26602." evidence="22" ref="2">
    <original>P</original>
    <variation>L</variation>
    <location>
        <position position="351"/>
    </location>
</feature>
<feature type="turn" evidence="31">
    <location>
        <begin position="219"/>
        <end position="221"/>
    </location>
</feature>
<feature type="helix" evidence="31">
    <location>
        <begin position="225"/>
        <end position="227"/>
    </location>
</feature>
<feature type="helix" evidence="31">
    <location>
        <begin position="232"/>
        <end position="239"/>
    </location>
</feature>
<feature type="helix" evidence="31">
    <location>
        <begin position="243"/>
        <end position="246"/>
    </location>
</feature>
<feature type="turn" evidence="31">
    <location>
        <begin position="249"/>
        <end position="251"/>
    </location>
</feature>
<feature type="helix" evidence="31">
    <location>
        <begin position="252"/>
        <end position="262"/>
    </location>
</feature>
<feature type="helix" evidence="31">
    <location>
        <begin position="265"/>
        <end position="269"/>
    </location>
</feature>
<feature type="helix" evidence="32">
    <location>
        <begin position="435"/>
        <end position="443"/>
    </location>
</feature>
<keyword id="KW-0002">3D-structure</keyword>
<keyword id="KW-0007">Acetylation</keyword>
<keyword id="KW-0009">Actin-binding</keyword>
<keyword id="KW-0131">Cell cycle</keyword>
<keyword id="KW-0132">Cell division</keyword>
<keyword id="KW-0963">Cytoplasm</keyword>
<keyword id="KW-0206">Cytoskeleton</keyword>
<keyword id="KW-0488">Methylation</keyword>
<keyword id="KW-0498">Mitosis</keyword>
<keyword id="KW-0539">Nucleus</keyword>
<keyword id="KW-0597">Phosphoprotein</keyword>
<keyword id="KW-1267">Proteomics identification</keyword>
<keyword id="KW-1185">Reference proteome</keyword>
<keyword id="KW-0677">Repeat</keyword>
<keyword id="KW-0804">Transcription</keyword>
<keyword id="KW-0805">Transcription regulation</keyword>
<dbReference type="EMBL" id="D88460">
    <property type="protein sequence ID" value="BAA20128.1"/>
    <property type="molecule type" value="mRNA"/>
</dbReference>
<dbReference type="EMBL" id="AM295156">
    <property type="protein sequence ID" value="CAL26602.1"/>
    <property type="molecule type" value="mRNA"/>
</dbReference>
<dbReference type="EMBL" id="AC006333">
    <property type="protein sequence ID" value="AAQ96857.1"/>
    <property type="molecule type" value="Genomic_DNA"/>
</dbReference>
<dbReference type="EMBL" id="BC052955">
    <property type="protein sequence ID" value="AAH52955.1"/>
    <property type="molecule type" value="mRNA"/>
</dbReference>
<dbReference type="CCDS" id="CCDS34743.1"/>
<dbReference type="RefSeq" id="NP_003932.3">
    <property type="nucleotide sequence ID" value="NM_003941.3"/>
</dbReference>
<dbReference type="PDB" id="2FF3">
    <property type="method" value="X-ray"/>
    <property type="resolution" value="2.00 A"/>
    <property type="chains" value="C=451-465"/>
</dbReference>
<dbReference type="PDB" id="2LNH">
    <property type="method" value="NMR"/>
    <property type="chains" value="A=207-270"/>
</dbReference>
<dbReference type="PDB" id="2VCP">
    <property type="method" value="X-ray"/>
    <property type="resolution" value="3.20 A"/>
    <property type="chains" value="D/E=392-484"/>
</dbReference>
<dbReference type="PDB" id="4CC2">
    <property type="method" value="X-ray"/>
    <property type="resolution" value="1.55 A"/>
    <property type="chains" value="B/D=346-357"/>
</dbReference>
<dbReference type="PDB" id="4CC7">
    <property type="method" value="X-ray"/>
    <property type="resolution" value="1.97 A"/>
    <property type="chains" value="B/D/F/H/J/L/N=346-357"/>
</dbReference>
<dbReference type="PDB" id="9DLX">
    <property type="method" value="EM"/>
    <property type="resolution" value="2.91 A"/>
    <property type="chains" value="H/I=465-505"/>
</dbReference>
<dbReference type="PDBsum" id="2FF3"/>
<dbReference type="PDBsum" id="2LNH"/>
<dbReference type="PDBsum" id="2VCP"/>
<dbReference type="PDBsum" id="4CC2"/>
<dbReference type="PDBsum" id="4CC7"/>
<dbReference type="PDBsum" id="9DLX"/>
<dbReference type="BMRB" id="O00401"/>
<dbReference type="EMDB" id="EMD-46992"/>
<dbReference type="SMR" id="O00401"/>
<dbReference type="BioGRID" id="114466">
    <property type="interactions" value="128"/>
</dbReference>
<dbReference type="CORUM" id="O00401"/>
<dbReference type="DIP" id="DIP-29042N"/>
<dbReference type="ELM" id="O00401"/>
<dbReference type="FunCoup" id="O00401">
    <property type="interactions" value="3486"/>
</dbReference>
<dbReference type="IntAct" id="O00401">
    <property type="interactions" value="78"/>
</dbReference>
<dbReference type="MINT" id="O00401"/>
<dbReference type="STRING" id="9606.ENSP00000223023"/>
<dbReference type="GlyGen" id="O00401">
    <property type="glycosylation" value="3 sites, 1 O-linked glycan (1 site)"/>
</dbReference>
<dbReference type="iPTMnet" id="O00401"/>
<dbReference type="PhosphoSitePlus" id="O00401"/>
<dbReference type="BioMuta" id="WASL"/>
<dbReference type="jPOST" id="O00401"/>
<dbReference type="MassIVE" id="O00401"/>
<dbReference type="PaxDb" id="9606-ENSP00000223023"/>
<dbReference type="PeptideAtlas" id="O00401"/>
<dbReference type="ProteomicsDB" id="47867"/>
<dbReference type="Pumba" id="O00401"/>
<dbReference type="Antibodypedia" id="1487">
    <property type="antibodies" value="247 antibodies from 37 providers"/>
</dbReference>
<dbReference type="DNASU" id="8976"/>
<dbReference type="Ensembl" id="ENST00000223023.5">
    <property type="protein sequence ID" value="ENSP00000223023.4"/>
    <property type="gene ID" value="ENSG00000106299.8"/>
</dbReference>
<dbReference type="GeneID" id="8976"/>
<dbReference type="KEGG" id="hsa:8976"/>
<dbReference type="MANE-Select" id="ENST00000223023.5">
    <property type="protein sequence ID" value="ENSP00000223023.4"/>
    <property type="RefSeq nucleotide sequence ID" value="NM_003941.4"/>
    <property type="RefSeq protein sequence ID" value="NP_003932.3"/>
</dbReference>
<dbReference type="UCSC" id="uc003vkz.5">
    <property type="organism name" value="human"/>
</dbReference>
<dbReference type="AGR" id="HGNC:12735"/>
<dbReference type="CTD" id="8976"/>
<dbReference type="DisGeNET" id="8976"/>
<dbReference type="GeneCards" id="WASL"/>
<dbReference type="HGNC" id="HGNC:12735">
    <property type="gene designation" value="WASL"/>
</dbReference>
<dbReference type="HPA" id="ENSG00000106299">
    <property type="expression patterns" value="Low tissue specificity"/>
</dbReference>
<dbReference type="MIM" id="605056">
    <property type="type" value="gene"/>
</dbReference>
<dbReference type="neXtProt" id="NX_O00401"/>
<dbReference type="OpenTargets" id="ENSG00000106299"/>
<dbReference type="PharmGKB" id="PA37346"/>
<dbReference type="VEuPathDB" id="HostDB:ENSG00000106299"/>
<dbReference type="eggNOG" id="KOG3671">
    <property type="taxonomic scope" value="Eukaryota"/>
</dbReference>
<dbReference type="GeneTree" id="ENSGT00730000110895"/>
<dbReference type="HOGENOM" id="CLU_015385_3_1_1"/>
<dbReference type="InParanoid" id="O00401"/>
<dbReference type="OMA" id="EYNQDRK"/>
<dbReference type="OrthoDB" id="8963340at2759"/>
<dbReference type="PAN-GO" id="O00401">
    <property type="GO annotations" value="2 GO annotations based on evolutionary models"/>
</dbReference>
<dbReference type="PhylomeDB" id="O00401"/>
<dbReference type="TreeFam" id="TF316736"/>
<dbReference type="PathwayCommons" id="O00401"/>
<dbReference type="Reactome" id="R-HSA-2029482">
    <property type="pathway name" value="Regulation of actin dynamics for phagocytic cup formation"/>
</dbReference>
<dbReference type="Reactome" id="R-HSA-203641">
    <property type="pathway name" value="NOSTRIN mediated eNOS trafficking"/>
</dbReference>
<dbReference type="Reactome" id="R-HSA-373753">
    <property type="pathway name" value="Nephrin family interactions"/>
</dbReference>
<dbReference type="Reactome" id="R-HSA-3928662">
    <property type="pathway name" value="EPHB-mediated forward signaling"/>
</dbReference>
<dbReference type="Reactome" id="R-HSA-418885">
    <property type="pathway name" value="DCC mediated attractive signaling"/>
</dbReference>
<dbReference type="Reactome" id="R-HSA-5663213">
    <property type="pathway name" value="RHO GTPases Activate WASPs and WAVEs"/>
</dbReference>
<dbReference type="Reactome" id="R-HSA-8856828">
    <property type="pathway name" value="Clathrin-mediated endocytosis"/>
</dbReference>
<dbReference type="Reactome" id="R-HSA-9013148">
    <property type="pathway name" value="CDC42 GTPase cycle"/>
</dbReference>
<dbReference type="Reactome" id="R-HSA-9013149">
    <property type="pathway name" value="RAC1 GTPase cycle"/>
</dbReference>
<dbReference type="Reactome" id="R-HSA-9013406">
    <property type="pathway name" value="RHOQ GTPase cycle"/>
</dbReference>
<dbReference type="Reactome" id="R-HSA-9013409">
    <property type="pathway name" value="RHOJ GTPase cycle"/>
</dbReference>
<dbReference type="Reactome" id="R-HSA-9013424">
    <property type="pathway name" value="RHOV GTPase cycle"/>
</dbReference>
<dbReference type="Reactome" id="R-HSA-9664422">
    <property type="pathway name" value="FCGR3A-mediated phagocytosis"/>
</dbReference>
<dbReference type="SignaLink" id="O00401"/>
<dbReference type="SIGNOR" id="O00401"/>
<dbReference type="BioGRID-ORCS" id="8976">
    <property type="hits" value="35 hits in 1169 CRISPR screens"/>
</dbReference>
<dbReference type="CD-CODE" id="F345034F">
    <property type="entry name" value="Signaling cluster"/>
</dbReference>
<dbReference type="CD-CODE" id="FB4E32DD">
    <property type="entry name" value="Presynaptic clusters and postsynaptic densities"/>
</dbReference>
<dbReference type="ChiTaRS" id="WASL">
    <property type="organism name" value="human"/>
</dbReference>
<dbReference type="EvolutionaryTrace" id="O00401"/>
<dbReference type="GeneWiki" id="WASL_(gene)"/>
<dbReference type="GenomeRNAi" id="8976"/>
<dbReference type="Pharos" id="O00401">
    <property type="development level" value="Tbio"/>
</dbReference>
<dbReference type="PRO" id="PR:O00401"/>
<dbReference type="Proteomes" id="UP000005640">
    <property type="component" value="Chromosome 7"/>
</dbReference>
<dbReference type="RNAct" id="O00401">
    <property type="molecule type" value="protein"/>
</dbReference>
<dbReference type="Bgee" id="ENSG00000106299">
    <property type="expression patterns" value="Expressed in middle temporal gyrus and 205 other cell types or tissues"/>
</dbReference>
<dbReference type="GO" id="GO:0030478">
    <property type="term" value="C:actin cap"/>
    <property type="evidence" value="ECO:0007669"/>
    <property type="project" value="Ensembl"/>
</dbReference>
<dbReference type="GO" id="GO:0015629">
    <property type="term" value="C:actin cytoskeleton"/>
    <property type="evidence" value="ECO:0000304"/>
    <property type="project" value="ProtInc"/>
</dbReference>
<dbReference type="GO" id="GO:0031410">
    <property type="term" value="C:cytoplasmic vesicle"/>
    <property type="evidence" value="ECO:0000250"/>
    <property type="project" value="BHF-UCL"/>
</dbReference>
<dbReference type="GO" id="GO:0005829">
    <property type="term" value="C:cytosol"/>
    <property type="evidence" value="ECO:0000314"/>
    <property type="project" value="UniProtKB"/>
</dbReference>
<dbReference type="GO" id="GO:0030666">
    <property type="term" value="C:endocytic vesicle membrane"/>
    <property type="evidence" value="ECO:0000304"/>
    <property type="project" value="Reactome"/>
</dbReference>
<dbReference type="GO" id="GO:0005789">
    <property type="term" value="C:endoplasmic reticulum membrane"/>
    <property type="evidence" value="ECO:0000318"/>
    <property type="project" value="GO_Central"/>
</dbReference>
<dbReference type="GO" id="GO:0070062">
    <property type="term" value="C:extracellular exosome"/>
    <property type="evidence" value="ECO:0007005"/>
    <property type="project" value="UniProtKB"/>
</dbReference>
<dbReference type="GO" id="GO:0098978">
    <property type="term" value="C:glutamatergic synapse"/>
    <property type="evidence" value="ECO:0007669"/>
    <property type="project" value="Ensembl"/>
</dbReference>
<dbReference type="GO" id="GO:0030027">
    <property type="term" value="C:lamellipodium"/>
    <property type="evidence" value="ECO:0007669"/>
    <property type="project" value="Ensembl"/>
</dbReference>
<dbReference type="GO" id="GO:0005634">
    <property type="term" value="C:nucleus"/>
    <property type="evidence" value="ECO:0000314"/>
    <property type="project" value="UniProtKB"/>
</dbReference>
<dbReference type="GO" id="GO:0005886">
    <property type="term" value="C:plasma membrane"/>
    <property type="evidence" value="ECO:0000304"/>
    <property type="project" value="Reactome"/>
</dbReference>
<dbReference type="GO" id="GO:0003779">
    <property type="term" value="F:actin binding"/>
    <property type="evidence" value="ECO:0007669"/>
    <property type="project" value="UniProtKB-KW"/>
</dbReference>
<dbReference type="GO" id="GO:0030695">
    <property type="term" value="F:GTPase regulator activity"/>
    <property type="evidence" value="ECO:0000304"/>
    <property type="project" value="ProtInc"/>
</dbReference>
<dbReference type="GO" id="GO:0030036">
    <property type="term" value="P:actin cytoskeleton organization"/>
    <property type="evidence" value="ECO:0000318"/>
    <property type="project" value="GO_Central"/>
</dbReference>
<dbReference type="GO" id="GO:0030041">
    <property type="term" value="P:actin filament polymerization"/>
    <property type="evidence" value="ECO:0000314"/>
    <property type="project" value="UniProtKB"/>
</dbReference>
<dbReference type="GO" id="GO:0008154">
    <property type="term" value="P:actin polymerization or depolymerization"/>
    <property type="evidence" value="ECO:0000304"/>
    <property type="project" value="ProtInc"/>
</dbReference>
<dbReference type="GO" id="GO:0051301">
    <property type="term" value="P:cell division"/>
    <property type="evidence" value="ECO:0007669"/>
    <property type="project" value="UniProtKB-KW"/>
</dbReference>
<dbReference type="GO" id="GO:0060997">
    <property type="term" value="P:dendritic spine morphogenesis"/>
    <property type="evidence" value="ECO:0000250"/>
    <property type="project" value="UniProtKB"/>
</dbReference>
<dbReference type="GO" id="GO:2000402">
    <property type="term" value="P:negative regulation of lymphocyte migration"/>
    <property type="evidence" value="ECO:0000315"/>
    <property type="project" value="CACAO"/>
</dbReference>
<dbReference type="GO" id="GO:1903526">
    <property type="term" value="P:negative regulation of membrane tubulation"/>
    <property type="evidence" value="ECO:0000314"/>
    <property type="project" value="UniProtKB"/>
</dbReference>
<dbReference type="GO" id="GO:2000370">
    <property type="term" value="P:positive regulation of clathrin-dependent endocytosis"/>
    <property type="evidence" value="ECO:0000250"/>
    <property type="project" value="BHF-UCL"/>
</dbReference>
<dbReference type="GO" id="GO:0051491">
    <property type="term" value="P:positive regulation of filopodium assembly"/>
    <property type="evidence" value="ECO:0000250"/>
    <property type="project" value="BHF-UCL"/>
</dbReference>
<dbReference type="GO" id="GO:0045944">
    <property type="term" value="P:positive regulation of transcription by RNA polymerase II"/>
    <property type="evidence" value="ECO:0000314"/>
    <property type="project" value="UniProtKB"/>
</dbReference>
<dbReference type="GO" id="GO:0065003">
    <property type="term" value="P:protein-containing complex assembly"/>
    <property type="evidence" value="ECO:0000304"/>
    <property type="project" value="ProtInc"/>
</dbReference>
<dbReference type="GO" id="GO:0031503">
    <property type="term" value="P:protein-containing complex localization"/>
    <property type="evidence" value="ECO:0007669"/>
    <property type="project" value="Ensembl"/>
</dbReference>
<dbReference type="GO" id="GO:0099175">
    <property type="term" value="P:regulation of postsynapse organization"/>
    <property type="evidence" value="ECO:0007669"/>
    <property type="project" value="Ensembl"/>
</dbReference>
<dbReference type="GO" id="GO:0032880">
    <property type="term" value="P:regulation of protein localization"/>
    <property type="evidence" value="ECO:0007669"/>
    <property type="project" value="Ensembl"/>
</dbReference>
<dbReference type="GO" id="GO:0009617">
    <property type="term" value="P:response to bacterium"/>
    <property type="evidence" value="ECO:0007669"/>
    <property type="project" value="Ensembl"/>
</dbReference>
<dbReference type="GO" id="GO:0051653">
    <property type="term" value="P:spindle localization"/>
    <property type="evidence" value="ECO:0007669"/>
    <property type="project" value="Ensembl"/>
</dbReference>
<dbReference type="GO" id="GO:0006900">
    <property type="term" value="P:vesicle budding from membrane"/>
    <property type="evidence" value="ECO:0000250"/>
    <property type="project" value="BHF-UCL"/>
</dbReference>
<dbReference type="GO" id="GO:0016050">
    <property type="term" value="P:vesicle organization"/>
    <property type="evidence" value="ECO:0000250"/>
    <property type="project" value="BHF-UCL"/>
</dbReference>
<dbReference type="GO" id="GO:0030050">
    <property type="term" value="P:vesicle transport along actin filament"/>
    <property type="evidence" value="ECO:0000250"/>
    <property type="project" value="BHF-UCL"/>
</dbReference>
<dbReference type="CDD" id="cd00132">
    <property type="entry name" value="CRIB"/>
    <property type="match status" value="1"/>
</dbReference>
<dbReference type="CDD" id="cd01205">
    <property type="entry name" value="EVH1_WASP-like"/>
    <property type="match status" value="1"/>
</dbReference>
<dbReference type="CDD" id="cd22075">
    <property type="entry name" value="WH2_hN-WASP_r2_like"/>
    <property type="match status" value="1"/>
</dbReference>
<dbReference type="CDD" id="cd22074">
    <property type="entry name" value="WH2_N-WASP_r1"/>
    <property type="match status" value="1"/>
</dbReference>
<dbReference type="FunFam" id="3.90.810.10:FF:000006">
    <property type="entry name" value="Neural Wiskott-Aldrich syndrome protein"/>
    <property type="match status" value="1"/>
</dbReference>
<dbReference type="FunFam" id="2.30.29.30:FF:000130">
    <property type="entry name" value="neural Wiskott-Aldrich syndrome protein"/>
    <property type="match status" value="1"/>
</dbReference>
<dbReference type="FunFam" id="3.90.810.10:FF:000003">
    <property type="entry name" value="Neural Wiskott-Aldrich syndrome protein-like"/>
    <property type="match status" value="1"/>
</dbReference>
<dbReference type="Gene3D" id="3.90.810.10">
    <property type="entry name" value="CRIB domain"/>
    <property type="match status" value="2"/>
</dbReference>
<dbReference type="Gene3D" id="2.30.29.30">
    <property type="entry name" value="Pleckstrin-homology domain (PH domain)/Phosphotyrosine-binding domain (PTB)"/>
    <property type="match status" value="1"/>
</dbReference>
<dbReference type="IDEAL" id="IID00256"/>
<dbReference type="InterPro" id="IPR000095">
    <property type="entry name" value="CRIB_dom"/>
</dbReference>
<dbReference type="InterPro" id="IPR036936">
    <property type="entry name" value="CRIB_dom_sf"/>
</dbReference>
<dbReference type="InterPro" id="IPR011993">
    <property type="entry name" value="PH-like_dom_sf"/>
</dbReference>
<dbReference type="InterPro" id="IPR011026">
    <property type="entry name" value="WAS_C"/>
</dbReference>
<dbReference type="InterPro" id="IPR033927">
    <property type="entry name" value="WASPfam_EVH1"/>
</dbReference>
<dbReference type="InterPro" id="IPR000697">
    <property type="entry name" value="WH1/EVH1_dom"/>
</dbReference>
<dbReference type="InterPro" id="IPR003124">
    <property type="entry name" value="WH2_dom"/>
</dbReference>
<dbReference type="PANTHER" id="PTHR11202:SF36">
    <property type="entry name" value="ACTIN NUCLEATION-PROMOTING FACTOR WASL"/>
    <property type="match status" value="1"/>
</dbReference>
<dbReference type="PANTHER" id="PTHR11202">
    <property type="entry name" value="SPROUTY-RELATED, EVH1 DOMAIN-CONTAINING PROTEIN FAMILY MEMBER"/>
    <property type="match status" value="1"/>
</dbReference>
<dbReference type="Pfam" id="PF00786">
    <property type="entry name" value="PBD"/>
    <property type="match status" value="1"/>
</dbReference>
<dbReference type="Pfam" id="PF00568">
    <property type="entry name" value="WH1"/>
    <property type="match status" value="1"/>
</dbReference>
<dbReference type="Pfam" id="PF02205">
    <property type="entry name" value="WH2"/>
    <property type="match status" value="2"/>
</dbReference>
<dbReference type="SMART" id="SM00285">
    <property type="entry name" value="PBD"/>
    <property type="match status" value="1"/>
</dbReference>
<dbReference type="SMART" id="SM00461">
    <property type="entry name" value="WH1"/>
    <property type="match status" value="1"/>
</dbReference>
<dbReference type="SMART" id="SM00246">
    <property type="entry name" value="WH2"/>
    <property type="match status" value="2"/>
</dbReference>
<dbReference type="SUPFAM" id="SSF50729">
    <property type="entry name" value="PH domain-like"/>
    <property type="match status" value="1"/>
</dbReference>
<dbReference type="SUPFAM" id="SSF47912">
    <property type="entry name" value="Wiscott-Aldrich syndrome protein, WASP, C-terminal domain"/>
    <property type="match status" value="2"/>
</dbReference>
<dbReference type="PROSITE" id="PS50108">
    <property type="entry name" value="CRIB"/>
    <property type="match status" value="1"/>
</dbReference>
<dbReference type="PROSITE" id="PS50229">
    <property type="entry name" value="WH1"/>
    <property type="match status" value="1"/>
</dbReference>
<dbReference type="PROSITE" id="PS51082">
    <property type="entry name" value="WH2"/>
    <property type="match status" value="2"/>
</dbReference>
<gene>
    <name type="primary">WASL</name>
</gene>
<name>WASL_HUMAN</name>
<sequence length="505" mass="54827">MSSVQQQPPPPRRVTNVGSLLLTPQENESLFTFLGKKCVTMSSAVVQLYAADRNCMWSKKCSGVACLVKDNPQRSYFLRIFDIKDGKLLWEQELYNNFVYNSPRGYFHTFAGDTCQVALNFANEEEAKKFRKAVTDLLGRRQRKSEKRRDPPNGPNLPMATVDIKNPEITTNRFYGPQVNNISHTKEKKKGKAKKKRLTKADIGTPSNFQHIGHVGWDPNTGFDLNNLDPELKNLFDMCGISEAQLKDRETSKVIYDFIEKTGGVEAVKNELRRQAPPPPPPSRGGPPPPPPPPHNSGPPPPPARGRGAPPPPPSRAPTAAPPPPPPSRPSVAVPPPPPNRMYPPPPPALPSSAPSGPPPPPPSVLGVGPVAPPPPPPPPPPPGPPPPPGLPSDGDHQVPTTAGNKAALLDQIREGAQLKKVEQNSRPVSCSGRDALLDQIRQGIQLKSVADGQESTPPTPAPTSGIVGALMEVMQKRSKAIHSSDEDEDEDDEEDFEDDDEWED</sequence>
<protein>
    <recommendedName>
        <fullName evidence="22">Actin nucleation-promoting factor WASL</fullName>
    </recommendedName>
    <alternativeName>
        <fullName evidence="21">Neural Wiskott-Aldrich syndrome protein</fullName>
        <shortName evidence="21">N-WASP</shortName>
    </alternativeName>
</protein>
<accession>O00401</accession>
<accession>A1JUI9</accession>
<accession>Q7Z746</accession>
<evidence type="ECO:0000250" key="1">
    <source>
        <dbReference type="UniProtKB" id="Q91YD9"/>
    </source>
</evidence>
<evidence type="ECO:0000250" key="2">
    <source>
        <dbReference type="UniProtKB" id="Q95107"/>
    </source>
</evidence>
<evidence type="ECO:0000255" key="3">
    <source>
        <dbReference type="PROSITE-ProRule" id="PRU00057"/>
    </source>
</evidence>
<evidence type="ECO:0000255" key="4">
    <source>
        <dbReference type="PROSITE-ProRule" id="PRU00406"/>
    </source>
</evidence>
<evidence type="ECO:0000255" key="5">
    <source>
        <dbReference type="PROSITE-ProRule" id="PRU00410"/>
    </source>
</evidence>
<evidence type="ECO:0000256" key="6">
    <source>
        <dbReference type="SAM" id="MobiDB-lite"/>
    </source>
</evidence>
<evidence type="ECO:0000269" key="7">
    <source>
    </source>
</evidence>
<evidence type="ECO:0000269" key="8">
    <source>
    </source>
</evidence>
<evidence type="ECO:0000269" key="9">
    <source>
    </source>
</evidence>
<evidence type="ECO:0000269" key="10">
    <source>
    </source>
</evidence>
<evidence type="ECO:0000269" key="11">
    <source>
    </source>
</evidence>
<evidence type="ECO:0000269" key="12">
    <source>
    </source>
</evidence>
<evidence type="ECO:0000269" key="13">
    <source>
    </source>
</evidence>
<evidence type="ECO:0000269" key="14">
    <source>
    </source>
</evidence>
<evidence type="ECO:0000269" key="15">
    <source>
    </source>
</evidence>
<evidence type="ECO:0000269" key="16">
    <source>
    </source>
</evidence>
<evidence type="ECO:0000269" key="17">
    <source>
    </source>
</evidence>
<evidence type="ECO:0000269" key="18">
    <source>
    </source>
</evidence>
<evidence type="ECO:0000269" key="19">
    <source>
    </source>
</evidence>
<evidence type="ECO:0000269" key="20">
    <source>
    </source>
</evidence>
<evidence type="ECO:0000303" key="21">
    <source>
    </source>
</evidence>
<evidence type="ECO:0000305" key="22"/>
<evidence type="ECO:0007744" key="23">
    <source>
        <dbReference type="PDB" id="4CC2"/>
    </source>
</evidence>
<evidence type="ECO:0007744" key="24">
    <source>
        <dbReference type="PDB" id="4CC7"/>
    </source>
</evidence>
<evidence type="ECO:0007744" key="25">
    <source>
    </source>
</evidence>
<evidence type="ECO:0007744" key="26">
    <source>
    </source>
</evidence>
<evidence type="ECO:0007744" key="27">
    <source>
    </source>
</evidence>
<evidence type="ECO:0007744" key="28">
    <source>
    </source>
</evidence>
<evidence type="ECO:0007744" key="29">
    <source>
    </source>
</evidence>
<evidence type="ECO:0007744" key="30">
    <source>
    </source>
</evidence>
<evidence type="ECO:0007829" key="31">
    <source>
        <dbReference type="PDB" id="2LNH"/>
    </source>
</evidence>
<evidence type="ECO:0007829" key="32">
    <source>
        <dbReference type="PDB" id="2VCP"/>
    </source>
</evidence>
<comment type="function">
    <text evidence="1 10 12 13 14 15 16 19">Regulates actin polymerization by stimulating the actin-nucleating activity of the Arp2/3 complex (PubMed:16767080, PubMed:19366662, PubMed:19487689, PubMed:22847007, PubMed:22921828, PubMed:9422512). Involved in various processes, such as mitosis and cytokinesis, via its role in the regulation of actin polymerization (PubMed:19366662, PubMed:19487689, PubMed:22847007, PubMed:22921828, PubMed:9422512). Together with CDC42, involved in the extension and maintenance of the formation of thin, actin-rich surface projections called filopodia (PubMed:9422512). In addition to its role in the cytoplasm, also plays a role in the nucleus by regulating gene transcription, probably by promoting nuclear actin polymerization (PubMed:16767080). Binds to HSF1/HSTF1 and forms a complex on heat shock promoter elements (HSE) that negatively regulates HSP90 expression (By similarity). Plays a role in dendrite spine morphogenesis (By similarity). Decreasing levels of DNMBP (using antisense RNA) alters apical junction morphology in cultured enterocytes, junctions curve instead of being nearly linear (PubMed:19767742).</text>
</comment>
<comment type="subunit">
    <text evidence="1 2 8 9 10 11 13 14 15 17 18 19">Binds actin and the Arp2/3 complex (PubMed:22847007). Interacts with CDC42 (PubMed:9422512). Interacts with FCHSD1 (By similarity). Interacts with FCHSD2 (PubMed:29887380). Binds to SH3 domains of GRB2. Interacts with the C-terminal SH3 domain of DNMBP (PubMed:17015620, PubMed:19767742, PubMed:24332715). Interacts with SNX9 (By similarity). Interacts with the WW domains of PRPF40A/FBP11 (By similarity). Interacts with PTK2/FAK1 (By similarity). Interacts with PACSIN1, PACSIN2 and PACSIN3 (By similarity). Interacts with NOSTRIN (PubMed:16234328). Binds to TNK2 (PubMed:16257963). Interacts with SNX33 (PubMed:19487689). Interacts with NONO (via second RRM domain); the interaction is direct (PubMed:16767080). Component of a multiprotein complex with NONO and SFPQ; associates with the complex via direct interaction with NONO (PubMed:16767080).</text>
</comment>
<comment type="subunit">
    <text evidence="12 16">(Microbial infection) Interacts with E.coli effector protein EspF(U) (PubMed:19366662, PubMed:22921828). Identified in a complex containing at least WASL, BAIAP2L1 and E.coli EspF(U) (PubMed:22921828).</text>
</comment>
<comment type="subunit">
    <text evidence="7 20">(Microbial infection) Interacts with Shigella flexneri protein IcsA (PubMed:10491394, PubMed:9582270). The interaction with IcsA enhances the affinity of WASL for Arp2/3, thus assembling a tight complex which has maximal activity in actin assembly (PubMed:10491394, PubMed:9582270).</text>
</comment>
<comment type="interaction">
    <interactant intactId="EBI-957615">
        <id>O00401</id>
    </interactant>
    <interactant intactId="EBI-11096309">
        <id>Q9NYB9-2</id>
        <label>ABI2</label>
    </interactant>
    <organismsDiffer>false</organismsDiffer>
    <experiments>5</experiments>
</comment>
<comment type="interaction">
    <interactant intactId="EBI-957615">
        <id>O00401</id>
    </interactant>
    <interactant intactId="EBI-11959591">
        <id>Q8IWW6-4</id>
        <label>ARHGAP12</label>
    </interactant>
    <organismsDiffer>false</organismsDiffer>
    <experiments>3</experiments>
</comment>
<comment type="interaction">
    <interactant intactId="EBI-957615">
        <id>O00401</id>
    </interactant>
    <interactant intactId="EBI-351829">
        <id>O15145</id>
        <label>ARPC3</label>
    </interactant>
    <organismsDiffer>false</organismsDiffer>
    <experiments>6</experiments>
</comment>
<comment type="interaction">
    <interactant intactId="EBI-957615">
        <id>O00401</id>
    </interactant>
    <interactant intactId="EBI-351872">
        <id>P59998</id>
        <label>ARPC4</label>
    </interactant>
    <organismsDiffer>false</organismsDiffer>
    <experiments>3</experiments>
</comment>
<comment type="interaction">
    <interactant intactId="EBI-957615">
        <id>O00401</id>
    </interactant>
    <interactant intactId="EBI-81752">
        <id>P60953</id>
        <label>CDC42</label>
    </interactant>
    <organismsDiffer>false</organismsDiffer>
    <experiments>3</experiments>
</comment>
<comment type="interaction">
    <interactant intactId="EBI-957615">
        <id>O00401</id>
    </interactant>
    <interactant intactId="EBI-372594">
        <id>Q99828</id>
        <label>CIB1</label>
    </interactant>
    <organismsDiffer>false</organismsDiffer>
    <experiments>7</experiments>
</comment>
<comment type="interaction">
    <interactant intactId="EBI-957615">
        <id>O00401</id>
    </interactant>
    <interactant intactId="EBI-16085546">
        <id>Q6XZF7-1</id>
        <label>DNMBP</label>
    </interactant>
    <organismsDiffer>false</organismsDiffer>
    <experiments>2</experiments>
</comment>
<comment type="interaction">
    <interactant intactId="EBI-957615">
        <id>O00401</id>
    </interactant>
    <interactant intactId="EBI-401755">
        <id>P62993</id>
        <label>GRB2</label>
    </interactant>
    <organismsDiffer>false</organismsDiffer>
    <experiments>12</experiments>
</comment>
<comment type="interaction">
    <interactant intactId="EBI-957615">
        <id>O00401</id>
    </interactant>
    <interactant intactId="EBI-16429340">
        <id>A0A0S2Z4D7</id>
        <label>NCK1</label>
    </interactant>
    <organismsDiffer>false</organismsDiffer>
    <experiments>3</experiments>
</comment>
<comment type="interaction">
    <interactant intactId="EBI-957615">
        <id>O00401</id>
    </interactant>
    <interactant intactId="EBI-389883">
        <id>P16333</id>
        <label>NCK1</label>
    </interactant>
    <organismsDiffer>false</organismsDiffer>
    <experiments>4</experiments>
</comment>
<comment type="interaction">
    <interactant intactId="EBI-957615">
        <id>O00401</id>
    </interactant>
    <interactant intactId="EBI-15578122">
        <id>P16333-1</id>
        <label>NCK1</label>
    </interactant>
    <organismsDiffer>false</organismsDiffer>
    <experiments>2</experiments>
</comment>
<comment type="interaction">
    <interactant intactId="EBI-957615">
        <id>O00401</id>
    </interactant>
    <interactant intactId="EBI-16429362">
        <id>E7ERP6</id>
        <label>NCK2</label>
    </interactant>
    <organismsDiffer>false</organismsDiffer>
    <experiments>3</experiments>
</comment>
<comment type="interaction">
    <interactant intactId="EBI-957615">
        <id>O00401</id>
    </interactant>
    <interactant intactId="EBI-713635">
        <id>O43639</id>
        <label>NCK2</label>
    </interactant>
    <organismsDiffer>false</organismsDiffer>
    <experiments>9</experiments>
</comment>
<comment type="interaction">
    <interactant intactId="EBI-957615">
        <id>O00401</id>
    </interactant>
    <interactant intactId="EBI-742503">
        <id>Q9UNF0</id>
        <label>PACSIN2</label>
    </interactant>
    <organismsDiffer>false</organismsDiffer>
    <experiments>3</experiments>
</comment>
<comment type="interaction">
    <interactant intactId="EBI-957615">
        <id>O00401</id>
    </interactant>
    <interactant intactId="EBI-77926">
        <id>Q9UKS6</id>
        <label>PACSIN3</label>
    </interactant>
    <organismsDiffer>false</organismsDiffer>
    <experiments>3</experiments>
</comment>
<comment type="interaction">
    <interactant intactId="EBI-957615">
        <id>O00401</id>
    </interactant>
    <interactant intactId="EBI-713738">
        <id>O96013</id>
        <label>PAK4</label>
    </interactant>
    <organismsDiffer>false</organismsDiffer>
    <experiments>8</experiments>
</comment>
<comment type="interaction">
    <interactant intactId="EBI-957615">
        <id>O00401</id>
    </interactant>
    <interactant intactId="EBI-1383632">
        <id>Q13882</id>
        <label>PTK6</label>
    </interactant>
    <organismsDiffer>false</organismsDiffer>
    <experiments>3</experiments>
</comment>
<comment type="interaction">
    <interactant intactId="EBI-957615">
        <id>O00401</id>
    </interactant>
    <interactant intactId="EBI-6285694">
        <id>Q9H4E5</id>
        <label>RHOJ</label>
    </interactant>
    <organismsDiffer>false</organismsDiffer>
    <experiments>6</experiments>
</comment>
<comment type="interaction">
    <interactant intactId="EBI-957615">
        <id>O00401</id>
    </interactant>
    <interactant intactId="EBI-373337">
        <id>O76064</id>
        <label>RNF8</label>
    </interactant>
    <organismsDiffer>false</organismsDiffer>
    <experiments>8</experiments>
</comment>
<comment type="interaction">
    <interactant intactId="EBI-957615">
        <id>O00401</id>
    </interactant>
    <interactant intactId="EBI-727004">
        <id>O00560</id>
        <label>SDCBP</label>
    </interactant>
    <organismsDiffer>false</organismsDiffer>
    <experiments>6</experiments>
</comment>
<comment type="interaction">
    <interactant intactId="EBI-957615">
        <id>O00401</id>
    </interactant>
    <interactant intactId="EBI-77848">
        <id>Q9Y5X1</id>
        <label>SNX9</label>
    </interactant>
    <organismsDiffer>false</organismsDiffer>
    <experiments>2</experiments>
</comment>
<comment type="interaction">
    <interactant intactId="EBI-957615">
        <id>O00401</id>
    </interactant>
    <interactant intactId="EBI-12037893">
        <id>O94875-10</id>
        <label>SORBS2</label>
    </interactant>
    <organismsDiffer>false</organismsDiffer>
    <experiments>3</experiments>
</comment>
<comment type="interaction">
    <interactant intactId="EBI-957615">
        <id>O00401</id>
    </interactant>
    <interactant intactId="EBI-1222956">
        <id>O60504-2</id>
        <label>SORBS3</label>
    </interactant>
    <organismsDiffer>false</organismsDiffer>
    <experiments>3</experiments>
</comment>
<comment type="interaction">
    <interactant intactId="EBI-957615">
        <id>O00401</id>
    </interactant>
    <interactant intactId="EBI-6550597">
        <id>Q15642-2</id>
        <label>TRIP10</label>
    </interactant>
    <organismsDiffer>false</organismsDiffer>
    <experiments>5</experiments>
</comment>
<comment type="interaction">
    <interactant intactId="EBI-957615">
        <id>O00401</id>
    </interactant>
    <interactant intactId="EBI-7353612">
        <id>P57075-2</id>
        <label>UBASH3A</label>
    </interactant>
    <organismsDiffer>false</organismsDiffer>
    <experiments>3</experiments>
</comment>
<comment type="interaction">
    <interactant intactId="EBI-957615">
        <id>O00401</id>
    </interactant>
    <interactant intactId="EBI-1380492">
        <id>Q8TF42</id>
        <label>UBASH3B</label>
    </interactant>
    <organismsDiffer>false</organismsDiffer>
    <experiments>3</experiments>
</comment>
<comment type="interaction">
    <interactant intactId="EBI-957615">
        <id>O00401</id>
    </interactant>
    <interactant intactId="EBI-346356">
        <id>O43516</id>
        <label>WIPF1</label>
    </interactant>
    <organismsDiffer>false</organismsDiffer>
    <experiments>10</experiments>
</comment>
<comment type="interaction">
    <interactant intactId="EBI-957615">
        <id>O00401</id>
    </interactant>
    <interactant intactId="EBI-2850112">
        <id>Q8TF74</id>
        <label>WIPF2</label>
    </interactant>
    <organismsDiffer>false</organismsDiffer>
    <experiments>8</experiments>
</comment>
<comment type="interaction">
    <interactant intactId="EBI-957615">
        <id>O00401</id>
    </interactant>
    <interactant intactId="EBI-3959572">
        <id>A6NGB9</id>
        <label>WIPF3</label>
    </interactant>
    <organismsDiffer>false</organismsDiffer>
    <experiments>4</experiments>
</comment>
<comment type="interaction">
    <interactant intactId="EBI-957615">
        <id>O00401</id>
    </interactant>
    <interactant intactId="EBI-367540">
        <id>P68135</id>
        <label>ACTA1</label>
    </interactant>
    <organismsDiffer>true</organismsDiffer>
    <experiments>2</experiments>
</comment>
<comment type="interaction">
    <interactant intactId="EBI-957615">
        <id>O00401</id>
    </interactant>
    <interactant intactId="EBI-351419">
        <id>P61157</id>
        <label>ACTR3</label>
    </interactant>
    <organismsDiffer>true</organismsDiffer>
    <experiments>3</experiments>
</comment>
<comment type="interaction">
    <interactant intactId="EBI-957615">
        <id>O00401</id>
    </interactant>
    <interactant intactId="EBI-10039462">
        <id>P0DJ88</id>
        <label>espF(U)</label>
    </interactant>
    <organismsDiffer>true</organismsDiffer>
    <experiments>2</experiments>
</comment>
<comment type="interaction">
    <interactant intactId="EBI-957615">
        <id>O00401</id>
    </interactant>
    <interactant intactId="EBI-22229752">
        <id>Q8X482</id>
        <label>espF(U)</label>
    </interactant>
    <organismsDiffer>true</organismsDiffer>
    <experiments>5</experiments>
</comment>
<comment type="interaction">
    <interactant intactId="EBI-957615">
        <id>O00401</id>
    </interactant>
    <interactant intactId="EBI-1111424">
        <id>Q8R511</id>
        <label>Fnbp1</label>
    </interactant>
    <organismsDiffer>true</organismsDiffer>
    <experiments>2</experiments>
</comment>
<comment type="subcellular location">
    <subcellularLocation>
        <location evidence="19">Cytoplasm</location>
        <location evidence="19">Cytoskeleton</location>
    </subcellularLocation>
    <subcellularLocation>
        <location evidence="10">Nucleus</location>
    </subcellularLocation>
    <subcellularLocation>
        <location evidence="1">Cytoplasm</location>
    </subcellularLocation>
    <text evidence="1">Preferentially localized in the cytoplasm when phosphorylated and in the nucleus when unphosphorylated (By similarity). Exported from the nucleus by an nuclear export signal (NES)-dependent mechanism to the cytoplasm (By similarity).</text>
</comment>
<comment type="PTM">
    <text evidence="9">Phosphorylation at Ser-242, Tyr-256, Ser-484 and Ser-485 enhances actin polymerization activity.</text>
</comment>
<organism>
    <name type="scientific">Homo sapiens</name>
    <name type="common">Human</name>
    <dbReference type="NCBI Taxonomy" id="9606"/>
    <lineage>
        <taxon>Eukaryota</taxon>
        <taxon>Metazoa</taxon>
        <taxon>Chordata</taxon>
        <taxon>Craniata</taxon>
        <taxon>Vertebrata</taxon>
        <taxon>Euteleostomi</taxon>
        <taxon>Mammalia</taxon>
        <taxon>Eutheria</taxon>
        <taxon>Euarchontoglires</taxon>
        <taxon>Primates</taxon>
        <taxon>Haplorrhini</taxon>
        <taxon>Catarrhini</taxon>
        <taxon>Hominidae</taxon>
        <taxon>Homo</taxon>
    </lineage>
</organism>